<dbReference type="EC" id="5.1.3.29" evidence="1"/>
<dbReference type="EMBL" id="AE005174">
    <property type="protein sequence ID" value="AAG57918.1"/>
    <property type="molecule type" value="Genomic_DNA"/>
</dbReference>
<dbReference type="EMBL" id="BA000007">
    <property type="protein sequence ID" value="BAB37087.1"/>
    <property type="molecule type" value="Genomic_DNA"/>
</dbReference>
<dbReference type="PIR" id="B85932">
    <property type="entry name" value="B85932"/>
</dbReference>
<dbReference type="PIR" id="H91086">
    <property type="entry name" value="H91086"/>
</dbReference>
<dbReference type="RefSeq" id="NP_311691.1">
    <property type="nucleotide sequence ID" value="NC_002695.1"/>
</dbReference>
<dbReference type="RefSeq" id="WP_000920840.1">
    <property type="nucleotide sequence ID" value="NZ_VOAI01000003.1"/>
</dbReference>
<dbReference type="SMR" id="P0AEP0"/>
<dbReference type="STRING" id="155864.Z4121"/>
<dbReference type="GeneID" id="916530"/>
<dbReference type="GeneID" id="93779194"/>
<dbReference type="KEGG" id="ece:Z4121"/>
<dbReference type="KEGG" id="ecs:ECs_3664"/>
<dbReference type="PATRIC" id="fig|386585.9.peg.3830"/>
<dbReference type="eggNOG" id="COG4154">
    <property type="taxonomic scope" value="Bacteria"/>
</dbReference>
<dbReference type="HOGENOM" id="CLU_120075_1_0_6"/>
<dbReference type="OMA" id="PVWDTYT"/>
<dbReference type="UniPathway" id="UPA00956"/>
<dbReference type="Proteomes" id="UP000000558">
    <property type="component" value="Chromosome"/>
</dbReference>
<dbReference type="Proteomes" id="UP000002519">
    <property type="component" value="Chromosome"/>
</dbReference>
<dbReference type="GO" id="GO:0005737">
    <property type="term" value="C:cytoplasm"/>
    <property type="evidence" value="ECO:0007669"/>
    <property type="project" value="UniProtKB-SubCell"/>
</dbReference>
<dbReference type="GO" id="GO:0042806">
    <property type="term" value="F:fucose binding"/>
    <property type="evidence" value="ECO:0007669"/>
    <property type="project" value="InterPro"/>
</dbReference>
<dbReference type="GO" id="GO:0036373">
    <property type="term" value="F:L-fucose mutarotase activity"/>
    <property type="evidence" value="ECO:0007669"/>
    <property type="project" value="UniProtKB-EC"/>
</dbReference>
<dbReference type="GO" id="GO:0036065">
    <property type="term" value="P:fucosylation"/>
    <property type="evidence" value="ECO:0007669"/>
    <property type="project" value="TreeGrafter"/>
</dbReference>
<dbReference type="GO" id="GO:0042354">
    <property type="term" value="P:L-fucose metabolic process"/>
    <property type="evidence" value="ECO:0007669"/>
    <property type="project" value="UniProtKB-UniRule"/>
</dbReference>
<dbReference type="FunFam" id="3.40.1650.10:FF:000001">
    <property type="entry name" value="L-fucose mutarotase"/>
    <property type="match status" value="1"/>
</dbReference>
<dbReference type="Gene3D" id="3.40.1650.10">
    <property type="entry name" value="RbsD-like domain"/>
    <property type="match status" value="1"/>
</dbReference>
<dbReference type="HAMAP" id="MF_01662">
    <property type="entry name" value="L_fucose_rotase"/>
    <property type="match status" value="1"/>
</dbReference>
<dbReference type="InterPro" id="IPR023751">
    <property type="entry name" value="L-fucose_mutarotase"/>
</dbReference>
<dbReference type="InterPro" id="IPR023750">
    <property type="entry name" value="RbsD-like_sf"/>
</dbReference>
<dbReference type="InterPro" id="IPR050443">
    <property type="entry name" value="RbsD/FucU_mutarotase"/>
</dbReference>
<dbReference type="InterPro" id="IPR007721">
    <property type="entry name" value="RbsD_FucU"/>
</dbReference>
<dbReference type="NCBIfam" id="NF011949">
    <property type="entry name" value="PRK15420.1"/>
    <property type="match status" value="1"/>
</dbReference>
<dbReference type="PANTHER" id="PTHR31690">
    <property type="entry name" value="FUCOSE MUTAROTASE"/>
    <property type="match status" value="1"/>
</dbReference>
<dbReference type="PANTHER" id="PTHR31690:SF4">
    <property type="entry name" value="FUCOSE MUTAROTASE"/>
    <property type="match status" value="1"/>
</dbReference>
<dbReference type="Pfam" id="PF05025">
    <property type="entry name" value="RbsD_FucU"/>
    <property type="match status" value="1"/>
</dbReference>
<dbReference type="SUPFAM" id="SSF102546">
    <property type="entry name" value="RbsD-like"/>
    <property type="match status" value="1"/>
</dbReference>
<keyword id="KW-0119">Carbohydrate metabolism</keyword>
<keyword id="KW-0963">Cytoplasm</keyword>
<keyword id="KW-0294">Fucose metabolism</keyword>
<keyword id="KW-0413">Isomerase</keyword>
<keyword id="KW-1185">Reference proteome</keyword>
<evidence type="ECO:0000255" key="1">
    <source>
        <dbReference type="HAMAP-Rule" id="MF_01662"/>
    </source>
</evidence>
<gene>
    <name evidence="1" type="primary">fucU</name>
    <name type="ordered locus">Z4121</name>
    <name type="ordered locus">ECs3664</name>
</gene>
<name>FUCM_ECO57</name>
<proteinExistence type="inferred from homology"/>
<protein>
    <recommendedName>
        <fullName evidence="1">L-fucose mutarotase</fullName>
        <ecNumber evidence="1">5.1.3.29</ecNumber>
    </recommendedName>
    <alternativeName>
        <fullName evidence="1">Fucose 1-epimerase</fullName>
    </alternativeName>
    <alternativeName>
        <fullName evidence="1">Type-2 mutarotase</fullName>
    </alternativeName>
</protein>
<feature type="chain" id="PRO_0000087382" description="L-fucose mutarotase">
    <location>
        <begin position="1"/>
        <end position="140"/>
    </location>
</feature>
<feature type="active site" description="Proton donor" evidence="1">
    <location>
        <position position="22"/>
    </location>
</feature>
<feature type="binding site" evidence="1">
    <location>
        <position position="30"/>
    </location>
    <ligand>
        <name>substrate</name>
    </ligand>
</feature>
<feature type="binding site" evidence="1">
    <location>
        <position position="107"/>
    </location>
    <ligand>
        <name>substrate</name>
    </ligand>
</feature>
<feature type="binding site" evidence="1">
    <location>
        <begin position="129"/>
        <end position="131"/>
    </location>
    <ligand>
        <name>substrate</name>
    </ligand>
</feature>
<accession>P0AEP0</accession>
<accession>P11555</accession>
<accession>Q46923</accession>
<reference key="1">
    <citation type="journal article" date="2001" name="Nature">
        <title>Genome sequence of enterohaemorrhagic Escherichia coli O157:H7.</title>
        <authorList>
            <person name="Perna N.T."/>
            <person name="Plunkett G. III"/>
            <person name="Burland V."/>
            <person name="Mau B."/>
            <person name="Glasner J.D."/>
            <person name="Rose D.J."/>
            <person name="Mayhew G.F."/>
            <person name="Evans P.S."/>
            <person name="Gregor J."/>
            <person name="Kirkpatrick H.A."/>
            <person name="Posfai G."/>
            <person name="Hackett J."/>
            <person name="Klink S."/>
            <person name="Boutin A."/>
            <person name="Shao Y."/>
            <person name="Miller L."/>
            <person name="Grotbeck E.J."/>
            <person name="Davis N.W."/>
            <person name="Lim A."/>
            <person name="Dimalanta E.T."/>
            <person name="Potamousis K."/>
            <person name="Apodaca J."/>
            <person name="Anantharaman T.S."/>
            <person name="Lin J."/>
            <person name="Yen G."/>
            <person name="Schwartz D.C."/>
            <person name="Welch R.A."/>
            <person name="Blattner F.R."/>
        </authorList>
    </citation>
    <scope>NUCLEOTIDE SEQUENCE [LARGE SCALE GENOMIC DNA]</scope>
    <source>
        <strain>O157:H7 / EDL933 / ATCC 700927 / EHEC</strain>
    </source>
</reference>
<reference key="2">
    <citation type="journal article" date="2001" name="DNA Res.">
        <title>Complete genome sequence of enterohemorrhagic Escherichia coli O157:H7 and genomic comparison with a laboratory strain K-12.</title>
        <authorList>
            <person name="Hayashi T."/>
            <person name="Makino K."/>
            <person name="Ohnishi M."/>
            <person name="Kurokawa K."/>
            <person name="Ishii K."/>
            <person name="Yokoyama K."/>
            <person name="Han C.-G."/>
            <person name="Ohtsubo E."/>
            <person name="Nakayama K."/>
            <person name="Murata T."/>
            <person name="Tanaka M."/>
            <person name="Tobe T."/>
            <person name="Iida T."/>
            <person name="Takami H."/>
            <person name="Honda T."/>
            <person name="Sasakawa C."/>
            <person name="Ogasawara N."/>
            <person name="Yasunaga T."/>
            <person name="Kuhara S."/>
            <person name="Shiba T."/>
            <person name="Hattori M."/>
            <person name="Shinagawa H."/>
        </authorList>
    </citation>
    <scope>NUCLEOTIDE SEQUENCE [LARGE SCALE GENOMIC DNA]</scope>
    <source>
        <strain>O157:H7 / Sakai / RIMD 0509952 / EHEC</strain>
    </source>
</reference>
<sequence length="140" mass="15473">MLKTISPLISPELLKVLAEMGHGDEIIFSDAHFPAHSMGPQVIRADGLLVSDLLQAIIPLFELDSYAPPLVMMAAVEGDTLDPEVERRYRNALSLQAPCPDIIRINRFAFYERAQKAFAIVITGERAKYGNILLKKGVTP</sequence>
<organism>
    <name type="scientific">Escherichia coli O157:H7</name>
    <dbReference type="NCBI Taxonomy" id="83334"/>
    <lineage>
        <taxon>Bacteria</taxon>
        <taxon>Pseudomonadati</taxon>
        <taxon>Pseudomonadota</taxon>
        <taxon>Gammaproteobacteria</taxon>
        <taxon>Enterobacterales</taxon>
        <taxon>Enterobacteriaceae</taxon>
        <taxon>Escherichia</taxon>
    </lineage>
</organism>
<comment type="function">
    <text evidence="1">Involved in the anomeric conversion of L-fucose.</text>
</comment>
<comment type="catalytic activity">
    <reaction evidence="1">
        <text>alpha-L-fucose = beta-L-fucose</text>
        <dbReference type="Rhea" id="RHEA:25580"/>
        <dbReference type="ChEBI" id="CHEBI:42548"/>
        <dbReference type="ChEBI" id="CHEBI:42589"/>
        <dbReference type="EC" id="5.1.3.29"/>
    </reaction>
</comment>
<comment type="pathway">
    <text evidence="1">Carbohydrate metabolism; L-fucose metabolism.</text>
</comment>
<comment type="subunit">
    <text evidence="1">Homodecamer.</text>
</comment>
<comment type="subcellular location">
    <subcellularLocation>
        <location evidence="1">Cytoplasm</location>
    </subcellularLocation>
</comment>
<comment type="similarity">
    <text evidence="1">Belongs to the RbsD / FucU family. FucU mutarotase subfamily.</text>
</comment>